<protein>
    <recommendedName>
        <fullName evidence="1">GTP cyclohydrolase FolE2</fullName>
        <ecNumber evidence="1">3.5.4.16</ecNumber>
    </recommendedName>
</protein>
<name>GCH4_BURM9</name>
<accession>A2S0N7</accession>
<accession>A2S0N6</accession>
<gene>
    <name evidence="1" type="primary">folE2</name>
    <name type="ordered locus">BMA10229_1706</name>
</gene>
<comment type="function">
    <text evidence="1">Converts GTP to 7,8-dihydroneopterin triphosphate.</text>
</comment>
<comment type="catalytic activity">
    <reaction evidence="1">
        <text>GTP + H2O = 7,8-dihydroneopterin 3'-triphosphate + formate + H(+)</text>
        <dbReference type="Rhea" id="RHEA:17473"/>
        <dbReference type="ChEBI" id="CHEBI:15377"/>
        <dbReference type="ChEBI" id="CHEBI:15378"/>
        <dbReference type="ChEBI" id="CHEBI:15740"/>
        <dbReference type="ChEBI" id="CHEBI:37565"/>
        <dbReference type="ChEBI" id="CHEBI:58462"/>
        <dbReference type="EC" id="3.5.4.16"/>
    </reaction>
</comment>
<comment type="pathway">
    <text evidence="1">Cofactor biosynthesis; 7,8-dihydroneopterin triphosphate biosynthesis; 7,8-dihydroneopterin triphosphate from GTP: step 1/1.</text>
</comment>
<comment type="similarity">
    <text evidence="1">Belongs to the GTP cyclohydrolase IV family.</text>
</comment>
<sequence>MNLMNPEFAMPDVQSTVDTRQMPIQRVGVRAVRHPLTVRTAEGETQATVGTWNLDVHLPADQKGTHMSRFVALLEERGGPLTADAFRTMLATMLEKLEARAGRIEVSFPYFVNKTAPVSGVRSLLDYEVTLTGDVRDGLTRVFAKVLVPVTSLCPCSKKISQYGAHNQRSHVTIDAELAADVPVEDLIRIAEEEASCELWGLLKRPDEKFVTERAYENPKFVEDLVRDVARRLDADERIVAYVLEAENFESIHNHSAYALIERDKRRGA</sequence>
<reference key="1">
    <citation type="journal article" date="2010" name="Genome Biol. Evol.">
        <title>Continuing evolution of Burkholderia mallei through genome reduction and large-scale rearrangements.</title>
        <authorList>
            <person name="Losada L."/>
            <person name="Ronning C.M."/>
            <person name="DeShazer D."/>
            <person name="Woods D."/>
            <person name="Fedorova N."/>
            <person name="Kim H.S."/>
            <person name="Shabalina S.A."/>
            <person name="Pearson T.R."/>
            <person name="Brinkac L."/>
            <person name="Tan P."/>
            <person name="Nandi T."/>
            <person name="Crabtree J."/>
            <person name="Badger J."/>
            <person name="Beckstrom-Sternberg S."/>
            <person name="Saqib M."/>
            <person name="Schutzer S.E."/>
            <person name="Keim P."/>
            <person name="Nierman W.C."/>
        </authorList>
    </citation>
    <scope>NUCLEOTIDE SEQUENCE [LARGE SCALE GENOMIC DNA]</scope>
    <source>
        <strain>NCTC 10229</strain>
    </source>
</reference>
<dbReference type="EC" id="3.5.4.16" evidence="1"/>
<dbReference type="EMBL" id="CP000545">
    <property type="protein sequence ID" value="ABM99271.2"/>
    <property type="molecule type" value="Genomic_DNA"/>
</dbReference>
<dbReference type="RefSeq" id="WP_004195713.1">
    <property type="nucleotide sequence ID" value="NC_008835.1"/>
</dbReference>
<dbReference type="SMR" id="A2S0N7"/>
<dbReference type="GeneID" id="93063968"/>
<dbReference type="KEGG" id="bml:BMA10229_1706"/>
<dbReference type="HOGENOM" id="CLU_062816_1_1_4"/>
<dbReference type="UniPathway" id="UPA00848">
    <property type="reaction ID" value="UER00151"/>
</dbReference>
<dbReference type="Proteomes" id="UP000002283">
    <property type="component" value="Chromosome II"/>
</dbReference>
<dbReference type="GO" id="GO:0003934">
    <property type="term" value="F:GTP cyclohydrolase I activity"/>
    <property type="evidence" value="ECO:0007669"/>
    <property type="project" value="UniProtKB-UniRule"/>
</dbReference>
<dbReference type="GO" id="GO:0046654">
    <property type="term" value="P:tetrahydrofolate biosynthetic process"/>
    <property type="evidence" value="ECO:0007669"/>
    <property type="project" value="UniProtKB-UniRule"/>
</dbReference>
<dbReference type="Gene3D" id="3.10.270.10">
    <property type="entry name" value="Urate Oxidase"/>
    <property type="match status" value="1"/>
</dbReference>
<dbReference type="HAMAP" id="MF_01527_B">
    <property type="entry name" value="GTP_cyclohydrol_B"/>
    <property type="match status" value="1"/>
</dbReference>
<dbReference type="InterPro" id="IPR022838">
    <property type="entry name" value="GTP_cyclohydrolase_FolE2"/>
</dbReference>
<dbReference type="InterPro" id="IPR003801">
    <property type="entry name" value="GTP_cyclohydrolase_FolE2/MptA"/>
</dbReference>
<dbReference type="NCBIfam" id="NF010200">
    <property type="entry name" value="PRK13674.1-1"/>
    <property type="match status" value="1"/>
</dbReference>
<dbReference type="PANTHER" id="PTHR36445">
    <property type="entry name" value="GTP CYCLOHYDROLASE MPTA"/>
    <property type="match status" value="1"/>
</dbReference>
<dbReference type="PANTHER" id="PTHR36445:SF1">
    <property type="entry name" value="GTP CYCLOHYDROLASE MPTA"/>
    <property type="match status" value="1"/>
</dbReference>
<dbReference type="Pfam" id="PF02649">
    <property type="entry name" value="GCHY-1"/>
    <property type="match status" value="1"/>
</dbReference>
<feature type="chain" id="PRO_1000068661" description="GTP cyclohydrolase FolE2">
    <location>
        <begin position="1"/>
        <end position="269"/>
    </location>
</feature>
<feature type="site" description="May be catalytically important" evidence="1">
    <location>
        <position position="154"/>
    </location>
</feature>
<proteinExistence type="inferred from homology"/>
<evidence type="ECO:0000255" key="1">
    <source>
        <dbReference type="HAMAP-Rule" id="MF_01527"/>
    </source>
</evidence>
<keyword id="KW-0378">Hydrolase</keyword>
<organism>
    <name type="scientific">Burkholderia mallei (strain NCTC 10229)</name>
    <dbReference type="NCBI Taxonomy" id="412022"/>
    <lineage>
        <taxon>Bacteria</taxon>
        <taxon>Pseudomonadati</taxon>
        <taxon>Pseudomonadota</taxon>
        <taxon>Betaproteobacteria</taxon>
        <taxon>Burkholderiales</taxon>
        <taxon>Burkholderiaceae</taxon>
        <taxon>Burkholderia</taxon>
        <taxon>pseudomallei group</taxon>
    </lineage>
</organism>